<reference key="1">
    <citation type="journal article" date="2008" name="Proc. Natl. Acad. Sci. U.S.A.">
        <title>Nitrogen fixation island and rhizosphere competence traits in the genome of root-associated Pseudomonas stutzeri A1501.</title>
        <authorList>
            <person name="Yan Y."/>
            <person name="Yang J."/>
            <person name="Dou Y."/>
            <person name="Chen M."/>
            <person name="Ping S."/>
            <person name="Peng J."/>
            <person name="Lu W."/>
            <person name="Zhang W."/>
            <person name="Yao Z."/>
            <person name="Li H."/>
            <person name="Liu W."/>
            <person name="He S."/>
            <person name="Geng L."/>
            <person name="Zhang X."/>
            <person name="Yang F."/>
            <person name="Yu H."/>
            <person name="Zhan Y."/>
            <person name="Li D."/>
            <person name="Lin Z."/>
            <person name="Wang Y."/>
            <person name="Elmerich C."/>
            <person name="Lin M."/>
            <person name="Jin Q."/>
        </authorList>
    </citation>
    <scope>NUCLEOTIDE SEQUENCE [LARGE SCALE GENOMIC DNA]</scope>
    <source>
        <strain>A1501</strain>
    </source>
</reference>
<feature type="chain" id="PRO_1000069857" description="3-octaprenyl-4-hydroxybenzoate carboxy-lyase">
    <location>
        <begin position="1"/>
        <end position="488"/>
    </location>
</feature>
<feature type="active site" description="Proton donor" evidence="1">
    <location>
        <position position="287"/>
    </location>
</feature>
<feature type="binding site" evidence="1">
    <location>
        <position position="172"/>
    </location>
    <ligand>
        <name>Mn(2+)</name>
        <dbReference type="ChEBI" id="CHEBI:29035"/>
    </ligand>
</feature>
<feature type="binding site" evidence="1">
    <location>
        <begin position="175"/>
        <end position="177"/>
    </location>
    <ligand>
        <name>prenylated FMN</name>
        <dbReference type="ChEBI" id="CHEBI:87746"/>
    </ligand>
</feature>
<feature type="binding site" evidence="1">
    <location>
        <begin position="189"/>
        <end position="191"/>
    </location>
    <ligand>
        <name>prenylated FMN</name>
        <dbReference type="ChEBI" id="CHEBI:87746"/>
    </ligand>
</feature>
<feature type="binding site" evidence="1">
    <location>
        <begin position="194"/>
        <end position="195"/>
    </location>
    <ligand>
        <name>prenylated FMN</name>
        <dbReference type="ChEBI" id="CHEBI:87746"/>
    </ligand>
</feature>
<feature type="binding site" evidence="1">
    <location>
        <position position="238"/>
    </location>
    <ligand>
        <name>Mn(2+)</name>
        <dbReference type="ChEBI" id="CHEBI:29035"/>
    </ligand>
</feature>
<accession>A4VGZ9</accession>
<protein>
    <recommendedName>
        <fullName evidence="1">3-octaprenyl-4-hydroxybenzoate carboxy-lyase</fullName>
        <ecNumber evidence="1">4.1.1.98</ecNumber>
    </recommendedName>
    <alternativeName>
        <fullName evidence="1">Polyprenyl p-hydroxybenzoate decarboxylase</fullName>
    </alternativeName>
</protein>
<gene>
    <name evidence="1" type="primary">ubiD</name>
    <name type="ordered locus">PST_0544</name>
</gene>
<proteinExistence type="inferred from homology"/>
<evidence type="ECO:0000255" key="1">
    <source>
        <dbReference type="HAMAP-Rule" id="MF_01636"/>
    </source>
</evidence>
<comment type="function">
    <text evidence="1">Catalyzes the decarboxylation of 3-octaprenyl-4-hydroxy benzoate to 2-octaprenylphenol, an intermediate step in ubiquinone biosynthesis.</text>
</comment>
<comment type="catalytic activity">
    <reaction evidence="1">
        <text>a 4-hydroxy-3-(all-trans-polyprenyl)benzoate + H(+) = a 2-(all-trans-polyprenyl)phenol + CO2</text>
        <dbReference type="Rhea" id="RHEA:41680"/>
        <dbReference type="Rhea" id="RHEA-COMP:9514"/>
        <dbReference type="Rhea" id="RHEA-COMP:9516"/>
        <dbReference type="ChEBI" id="CHEBI:1269"/>
        <dbReference type="ChEBI" id="CHEBI:15378"/>
        <dbReference type="ChEBI" id="CHEBI:16526"/>
        <dbReference type="ChEBI" id="CHEBI:78396"/>
        <dbReference type="EC" id="4.1.1.98"/>
    </reaction>
</comment>
<comment type="cofactor">
    <cofactor evidence="1">
        <name>prenylated FMN</name>
        <dbReference type="ChEBI" id="CHEBI:87746"/>
    </cofactor>
    <text evidence="1">Binds 1 prenylated FMN per subunit.</text>
</comment>
<comment type="cofactor">
    <cofactor evidence="1">
        <name>Mn(2+)</name>
        <dbReference type="ChEBI" id="CHEBI:29035"/>
    </cofactor>
</comment>
<comment type="pathway">
    <text evidence="1">Cofactor biosynthesis; ubiquinone biosynthesis.</text>
</comment>
<comment type="subunit">
    <text evidence="1">Homohexamer.</text>
</comment>
<comment type="subcellular location">
    <subcellularLocation>
        <location evidence="1">Cell membrane</location>
        <topology evidence="1">Peripheral membrane protein</topology>
    </subcellularLocation>
</comment>
<comment type="similarity">
    <text evidence="1">Belongs to the UbiD family.</text>
</comment>
<name>UBID_STUS1</name>
<keyword id="KW-1003">Cell membrane</keyword>
<keyword id="KW-0210">Decarboxylase</keyword>
<keyword id="KW-0285">Flavoprotein</keyword>
<keyword id="KW-0288">FMN</keyword>
<keyword id="KW-0456">Lyase</keyword>
<keyword id="KW-0464">Manganese</keyword>
<keyword id="KW-0472">Membrane</keyword>
<keyword id="KW-0479">Metal-binding</keyword>
<keyword id="KW-1185">Reference proteome</keyword>
<keyword id="KW-0831">Ubiquinone biosynthesis</keyword>
<sequence length="488" mass="54869">MQYRDLRDFISGLEKRGELKRVTAAVSPVLEMTEICDRTLRKQGPALLFENPTGFDMPVLGNLFGTPGRVALGMGAEDVSELREIGKLLAFLKEPEPPKGLKDAWSKLPIYKKVISMAPKVLKDAPCQEVIVEGDDVDLTKIPVQHCWPGDAAPLITWGLTITKGPNKERQNLGIYRQQVIGRNKVIMRWLSHRGGALDFREWCEKYPDRPYPVAVALGADPATILGAVTPVPDTLSEYAFAGLLRGSRTELVKAIGSELQVPAYAEIVLEGHIHPGEMADEGPYGDHTGYYNEVDRFPVFTVERITHRKNPIYHSTYTGRPPDEPAILGVALNEVFVPILQKQFPEIVDFYLPPEGCSYRMAVVTMKKQYPGHAKRVMLGVWSFLRQFMYTKFVIVTDDDINARDWNDVIWAITTRMDPKRDTVMIDNTPIDYLDFASPISGLGSKMGLDATHKWPGETNREWGRAIVQDPAVKRRVDELWLQLGID</sequence>
<organism>
    <name type="scientific">Stutzerimonas stutzeri (strain A1501)</name>
    <name type="common">Pseudomonas stutzeri</name>
    <dbReference type="NCBI Taxonomy" id="379731"/>
    <lineage>
        <taxon>Bacteria</taxon>
        <taxon>Pseudomonadati</taxon>
        <taxon>Pseudomonadota</taxon>
        <taxon>Gammaproteobacteria</taxon>
        <taxon>Pseudomonadales</taxon>
        <taxon>Pseudomonadaceae</taxon>
        <taxon>Stutzerimonas</taxon>
    </lineage>
</organism>
<dbReference type="EC" id="4.1.1.98" evidence="1"/>
<dbReference type="EMBL" id="CP000304">
    <property type="protein sequence ID" value="ABP78250.1"/>
    <property type="molecule type" value="Genomic_DNA"/>
</dbReference>
<dbReference type="RefSeq" id="WP_011911777.1">
    <property type="nucleotide sequence ID" value="NC_009434.1"/>
</dbReference>
<dbReference type="SMR" id="A4VGZ9"/>
<dbReference type="KEGG" id="psa:PST_0544"/>
<dbReference type="eggNOG" id="COG0043">
    <property type="taxonomic scope" value="Bacteria"/>
</dbReference>
<dbReference type="HOGENOM" id="CLU_023348_4_1_6"/>
<dbReference type="UniPathway" id="UPA00232"/>
<dbReference type="Proteomes" id="UP000000233">
    <property type="component" value="Chromosome"/>
</dbReference>
<dbReference type="GO" id="GO:0005829">
    <property type="term" value="C:cytosol"/>
    <property type="evidence" value="ECO:0007669"/>
    <property type="project" value="TreeGrafter"/>
</dbReference>
<dbReference type="GO" id="GO:0005886">
    <property type="term" value="C:plasma membrane"/>
    <property type="evidence" value="ECO:0007669"/>
    <property type="project" value="UniProtKB-SubCell"/>
</dbReference>
<dbReference type="GO" id="GO:0008694">
    <property type="term" value="F:3-octaprenyl-4-hydroxybenzoate carboxy-lyase activity"/>
    <property type="evidence" value="ECO:0007669"/>
    <property type="project" value="UniProtKB-UniRule"/>
</dbReference>
<dbReference type="GO" id="GO:0046872">
    <property type="term" value="F:metal ion binding"/>
    <property type="evidence" value="ECO:0007669"/>
    <property type="project" value="UniProtKB-KW"/>
</dbReference>
<dbReference type="GO" id="GO:0006744">
    <property type="term" value="P:ubiquinone biosynthetic process"/>
    <property type="evidence" value="ECO:0007669"/>
    <property type="project" value="UniProtKB-UniRule"/>
</dbReference>
<dbReference type="FunFam" id="1.20.5.570:FF:000001">
    <property type="entry name" value="3-octaprenyl-4-hydroxybenzoate carboxy-lyase"/>
    <property type="match status" value="1"/>
</dbReference>
<dbReference type="FunFam" id="3.40.1670.10:FF:000001">
    <property type="entry name" value="3-octaprenyl-4-hydroxybenzoate carboxy-lyase"/>
    <property type="match status" value="1"/>
</dbReference>
<dbReference type="Gene3D" id="1.20.5.570">
    <property type="entry name" value="Single helix bin"/>
    <property type="match status" value="1"/>
</dbReference>
<dbReference type="Gene3D" id="3.40.1670.10">
    <property type="entry name" value="UbiD C-terminal domain-like"/>
    <property type="match status" value="1"/>
</dbReference>
<dbReference type="HAMAP" id="MF_01636">
    <property type="entry name" value="UbiD"/>
    <property type="match status" value="1"/>
</dbReference>
<dbReference type="InterPro" id="IPR002830">
    <property type="entry name" value="UbiD"/>
</dbReference>
<dbReference type="InterPro" id="IPR049381">
    <property type="entry name" value="UbiD-like_C"/>
</dbReference>
<dbReference type="InterPro" id="IPR049383">
    <property type="entry name" value="UbiD-like_N"/>
</dbReference>
<dbReference type="InterPro" id="IPR023677">
    <property type="entry name" value="UbiD_bacteria"/>
</dbReference>
<dbReference type="InterPro" id="IPR048304">
    <property type="entry name" value="UbiD_Rift_dom"/>
</dbReference>
<dbReference type="NCBIfam" id="NF008175">
    <property type="entry name" value="PRK10922.1"/>
    <property type="match status" value="1"/>
</dbReference>
<dbReference type="NCBIfam" id="TIGR00148">
    <property type="entry name" value="UbiD family decarboxylase"/>
    <property type="match status" value="1"/>
</dbReference>
<dbReference type="PANTHER" id="PTHR30108">
    <property type="entry name" value="3-OCTAPRENYL-4-HYDROXYBENZOATE CARBOXY-LYASE-RELATED"/>
    <property type="match status" value="1"/>
</dbReference>
<dbReference type="PANTHER" id="PTHR30108:SF17">
    <property type="entry name" value="FERULIC ACID DECARBOXYLASE 1"/>
    <property type="match status" value="1"/>
</dbReference>
<dbReference type="Pfam" id="PF01977">
    <property type="entry name" value="UbiD"/>
    <property type="match status" value="1"/>
</dbReference>
<dbReference type="Pfam" id="PF20696">
    <property type="entry name" value="UbiD_C"/>
    <property type="match status" value="1"/>
</dbReference>
<dbReference type="Pfam" id="PF20695">
    <property type="entry name" value="UbiD_N"/>
    <property type="match status" value="1"/>
</dbReference>
<dbReference type="SUPFAM" id="SSF50475">
    <property type="entry name" value="FMN-binding split barrel"/>
    <property type="match status" value="1"/>
</dbReference>
<dbReference type="SUPFAM" id="SSF143968">
    <property type="entry name" value="UbiD C-terminal domain-like"/>
    <property type="match status" value="1"/>
</dbReference>